<name>FUS_HRSV</name>
<proteinExistence type="evidence at protein level"/>
<organismHost>
    <name type="scientific">Homo sapiens</name>
    <name type="common">Human</name>
    <dbReference type="NCBI Taxonomy" id="9606"/>
</organismHost>
<comment type="function">
    <molecule>Fusion glycoprotein F0</molecule>
    <text evidence="1">Inactive precursor that is cleaved at two sites by a furin-like protease to give rise to the mature F1 and F2 fusion glycoproteins.</text>
</comment>
<comment type="function">
    <molecule>Fusion glycoprotein F1</molecule>
    <text evidence="1">Class I viral fusion protein. Under the current model, the protein has at least 3 conformational states: pre-fusion native state, pre-hairpin intermediate state, and post-fusion hairpin state. During viral and plasma cell membrane fusion, the coiled coil regions assume a trimer-of-hairpins structure, positioning the fusion peptide in close proximity to the C-terminal region of the ectodomain. The formation of this structure appears to drive apposition and subsequent fusion of viral and cellular membranes leading to delivery of the nucleocapsid into the cytoplasm. This fusion is pH independent and occurs at the plasma or endosomal membrane. The trimer of F1-F2 (F protein) also facilitates the attachment to host cell by binding to host heparan sulfate. F protein is involved in the entry into the host cell through the interaction with host IGF1R. This interaction activates PRKCZ/PKCzeta that recruits host NCL/nucleolin to the apical cell surface where it can bind fusion glycoprotein F1. Later in infection, F protein expressed at the plasma membrane of infected cells can mediate fusion with adjacent cells to form syncytia, a cytopathic effect that could lead to tissue necrosis. F protein may trigger p53-dependent apoptosis.</text>
</comment>
<comment type="function">
    <molecule>Fusion glycoprotein F2</molecule>
    <text evidence="1">Major determinant of the species specificity of RSV infection. The trimer of F1-F2 (F protein) also facilitates the attachment to host cell by binding to host heparan sulfate. F protein is involved in the entry into the host cell through the interaction with host IGF1R. This interaction activates PRKCZ/PKCzeta that recruits host NCL/nucleolin to the apical cell surface where it can bind fusion glycoprotein F1. Later in infection, F protein expressed at the plasma membrane of infected cells can mediate fusion with adjacent cells to form syncytia, a cytopathic effect that could lead to tissue necrosis. F protein seems to trigger p53-dependent apoptosis.</text>
</comment>
<comment type="subunit">
    <molecule>Fusion glycoprotein F1</molecule>
    <text evidence="1">Homotrimer. Heterodimer with fusion protein F2; disulfide-linked. Interacts with host NCL; this interaction plays a role in viral entry into the host cell. As a heterodimer with F2, interacts with host heparan sulfate. As a heterodimer with F2, interacts with host IGF1R; this interaction activates PRKCZ/PKCzeta that recruits NCL/nucleolin from the host nucleus to the plasma membrane. Part of a complex composed of F1, F2 and G glycoproteins. As a heterodimer with F2, interacts with host RHOA; this interaction facilitates virus-induced syncytium formation.</text>
</comment>
<comment type="subunit">
    <molecule>Fusion glycoprotein F2</molecule>
    <text evidence="1">Homotrimer. Heterodimer with fusion protein F1; disulfide-linked. As a heterodimer with F1, interacts with host heparan sulfate. As a heterodimer with F1, interacts with host IGF1R; this interaction activates PRKCZ/PKCzeta that recruits NCL/nucleolin from the host nucleus to the plasma membrane. Part of a complex composed of F1, F2 and G glycoproteins. As a heterodimer with F1, interacts with host RHOA; this interaction facilitates virus-induced syncytium formation.</text>
</comment>
<comment type="subcellular location">
    <molecule>Fusion glycoprotein F0</molecule>
    <subcellularLocation>
        <location evidence="1">Host Golgi apparatus membrane</location>
        <topology evidence="1">Single-pass membrane protein</topology>
    </subcellularLocation>
</comment>
<comment type="subcellular location">
    <molecule>Fusion glycoprotein F1</molecule>
    <subcellularLocation>
        <location evidence="1">Virion membrane</location>
        <topology evidence="1">Single-pass type I membrane protein</topology>
    </subcellularLocation>
    <subcellularLocation>
        <location evidence="1">Host cell membrane</location>
        <topology evidence="1">Single-pass membrane protein</topology>
    </subcellularLocation>
    <text evidence="1">Localized at the host apical membrane.</text>
</comment>
<comment type="subcellular location">
    <molecule>Fusion glycoprotein F2</molecule>
    <subcellularLocation>
        <location evidence="1">Virion membrane</location>
    </subcellularLocation>
    <subcellularLocation>
        <location evidence="1">Host cell membrane</location>
    </subcellularLocation>
    <text evidence="1">Localized at the host apical membrane.</text>
</comment>
<comment type="domain">
    <molecule>Fusion glycoprotein F0</molecule>
    <text evidence="1 2">The N-terminus is a hydrophobic fusion peptide that inserts into the target host membrane (By similarity). It is buried in the center of the trimer cavity before cleavage by host furin. The coiled coil (heptad repeat) regions are probably involved in homotrimerization, heterodimerization and in the formation of a fusion-active hairpin structure (By similarity).</text>
</comment>
<comment type="domain">
    <molecule>Fusion glycoprotein F1</molecule>
    <text evidence="1 2">The N-terminus is a hydrophobic fusion peptide that inserts into the target host membrane (By similarity). It is buried in the center of the trimer cavity before cleavage by host furin. The coiled coil (heptad repeat) regions are probably involved in homotrimerization, heterodimerization and in the formation of a fusion-active hairpin structure (By similarity).</text>
</comment>
<comment type="PTM">
    <molecule>Fusion glycoprotein F0</molecule>
    <text evidence="1">The F glycoprotein is synthesized as a F0 inactive precursor that is heavily N-glycosylated and processed at two sites by a host furin-like protease probably in the Golgi. The cleavage site between p27 and F1 may occur after endocytosis to yield the mature F1 and F2 proteins. Both cleavages are required for membrane fusion and p27 is released from the processed protein.</text>
</comment>
<comment type="similarity">
    <text evidence="5">Belongs to the paramyxoviruses fusion glycoprotein family.</text>
</comment>
<keyword id="KW-0002">3D-structure</keyword>
<keyword id="KW-0165">Cleavage on pair of basic residues</keyword>
<keyword id="KW-0175">Coiled coil</keyword>
<keyword id="KW-1015">Disulfide bond</keyword>
<keyword id="KW-1169">Fusion of virus membrane with host cell membrane</keyword>
<keyword id="KW-1168">Fusion of virus membrane with host membrane</keyword>
<keyword id="KW-0325">Glycoprotein</keyword>
<keyword id="KW-1032">Host cell membrane</keyword>
<keyword id="KW-1040">Host Golgi apparatus</keyword>
<keyword id="KW-1043">Host membrane</keyword>
<keyword id="KW-0945">Host-virus interaction</keyword>
<keyword id="KW-0449">Lipoprotein</keyword>
<keyword id="KW-0472">Membrane</keyword>
<keyword id="KW-0564">Palmitate</keyword>
<keyword id="KW-0732">Signal</keyword>
<keyword id="KW-1180">Syncytium formation induced by viral infection</keyword>
<keyword id="KW-0812">Transmembrane</keyword>
<keyword id="KW-1133">Transmembrane helix</keyword>
<keyword id="KW-1161">Viral attachment to host cell</keyword>
<keyword id="KW-1234">Viral attachment to host entry receptor</keyword>
<keyword id="KW-0261">Viral envelope protein</keyword>
<keyword id="KW-1162">Viral penetration into host cytoplasm</keyword>
<keyword id="KW-0946">Virion</keyword>
<keyword id="KW-1160">Virus entry into host cell</keyword>
<accession>P12568</accession>
<accession>Q4KRW4</accession>
<reference key="1">
    <citation type="journal article" date="2005" name="J. Virol.">
        <title>Respiratory syncytial virus nonstructural proteins NS1 and NS2 mediate inhibition of Stat2 expression and alpha/beta interferon responsiveness.</title>
        <authorList>
            <person name="Lo M.S."/>
            <person name="Brazas R.M."/>
            <person name="Holtzman M.J."/>
        </authorList>
    </citation>
    <scope>NUCLEOTIDE SEQUENCE [LARGE SCALE GENOMIC RNA]</scope>
    <source>
        <strain>ATCC VR-26</strain>
    </source>
</reference>
<reference key="2">
    <citation type="journal article" date="1988" name="Virus Res.">
        <title>Nucleotide sequence of the fusion and phosphoprotein genes of human respiratory syncytial (RS) virus Long strain: evidence of subtype genetic heterogeneity.</title>
        <authorList>
            <person name="Lopez J.A."/>
            <person name="Villanueva N."/>
            <person name="Melero J.A."/>
            <person name="Portela A."/>
        </authorList>
    </citation>
    <scope>NUCLEOTIDE SEQUENCE [GENOMIC RNA]</scope>
    <scope>VARIANTS LYS-80; PRO-101; THR-152 AND ALA-442</scope>
</reference>
<dbReference type="EMBL" id="AY911262">
    <property type="protein sequence ID" value="AAX23994.1"/>
    <property type="molecule type" value="Genomic_RNA"/>
</dbReference>
<dbReference type="EMBL" id="M22643">
    <property type="protein sequence ID" value="AAA47409.1"/>
    <property type="molecule type" value="Genomic_RNA"/>
</dbReference>
<dbReference type="PIR" id="S07944">
    <property type="entry name" value="VGNZL"/>
</dbReference>
<dbReference type="PDB" id="8T7A">
    <property type="method" value="EM"/>
    <property type="resolution" value="2.80 A"/>
    <property type="chains" value="A/B/C=26-109, a/b/c=137-513"/>
</dbReference>
<dbReference type="PDBsum" id="8T7A"/>
<dbReference type="EMDB" id="EMD-41089"/>
<dbReference type="SMR" id="P12568"/>
<dbReference type="GlyCosmos" id="P12568">
    <property type="glycosylation" value="6 sites, No reported glycans"/>
</dbReference>
<dbReference type="ABCD" id="P12568">
    <property type="antibodies" value="258 sequenced antibodies"/>
</dbReference>
<dbReference type="Proteomes" id="UP000158141">
    <property type="component" value="Genome"/>
</dbReference>
<dbReference type="GO" id="GO:0044178">
    <property type="term" value="C:host cell Golgi membrane"/>
    <property type="evidence" value="ECO:0007669"/>
    <property type="project" value="UniProtKB-SubCell"/>
</dbReference>
<dbReference type="GO" id="GO:0020002">
    <property type="term" value="C:host cell plasma membrane"/>
    <property type="evidence" value="ECO:0007669"/>
    <property type="project" value="UniProtKB-SubCell"/>
</dbReference>
<dbReference type="GO" id="GO:0016020">
    <property type="term" value="C:membrane"/>
    <property type="evidence" value="ECO:0007669"/>
    <property type="project" value="UniProtKB-KW"/>
</dbReference>
<dbReference type="GO" id="GO:0019031">
    <property type="term" value="C:viral envelope"/>
    <property type="evidence" value="ECO:0007669"/>
    <property type="project" value="UniProtKB-KW"/>
</dbReference>
<dbReference type="GO" id="GO:0055036">
    <property type="term" value="C:virion membrane"/>
    <property type="evidence" value="ECO:0007669"/>
    <property type="project" value="UniProtKB-SubCell"/>
</dbReference>
<dbReference type="GO" id="GO:0098670">
    <property type="term" value="P:entry receptor-mediated virion attachment to host cell"/>
    <property type="evidence" value="ECO:0007669"/>
    <property type="project" value="UniProtKB-KW"/>
</dbReference>
<dbReference type="GO" id="GO:0019064">
    <property type="term" value="P:fusion of virus membrane with host plasma membrane"/>
    <property type="evidence" value="ECO:0007669"/>
    <property type="project" value="UniProtKB-KW"/>
</dbReference>
<dbReference type="GO" id="GO:0046718">
    <property type="term" value="P:symbiont entry into host cell"/>
    <property type="evidence" value="ECO:0007669"/>
    <property type="project" value="UniProtKB-KW"/>
</dbReference>
<dbReference type="GO" id="GO:0060141">
    <property type="term" value="P:symbiont-mediated induction of syncytium formation"/>
    <property type="evidence" value="ECO:0007669"/>
    <property type="project" value="UniProtKB-KW"/>
</dbReference>
<dbReference type="FunFam" id="1.10.287.2480:FF:000001">
    <property type="entry name" value="Fusion glycoprotein F0"/>
    <property type="match status" value="1"/>
</dbReference>
<dbReference type="FunFam" id="1.10.287.2480:FF:000002">
    <property type="entry name" value="Fusion glycoprotein F0"/>
    <property type="match status" value="1"/>
</dbReference>
<dbReference type="Gene3D" id="1.10.287.2480">
    <property type="match status" value="2"/>
</dbReference>
<dbReference type="Gene3D" id="6.10.250.1160">
    <property type="match status" value="1"/>
</dbReference>
<dbReference type="Gene3D" id="6.20.370.50">
    <property type="match status" value="1"/>
</dbReference>
<dbReference type="InterPro" id="IPR000776">
    <property type="entry name" value="Fusion_F0_Paramyxovir"/>
</dbReference>
<dbReference type="Pfam" id="PF00523">
    <property type="entry name" value="Fusion_gly"/>
    <property type="match status" value="1"/>
</dbReference>
<dbReference type="SUPFAM" id="SSF58069">
    <property type="entry name" value="Virus ectodomain"/>
    <property type="match status" value="2"/>
</dbReference>
<gene>
    <name type="primary">F</name>
</gene>
<protein>
    <recommendedName>
        <fullName>Fusion glycoprotein F0</fullName>
    </recommendedName>
    <component>
        <recommendedName>
            <fullName evidence="1">Fusion glycoprotein F2</fullName>
            <shortName>F2</shortName>
        </recommendedName>
    </component>
    <component>
        <recommendedName>
            <fullName evidence="1">p27</fullName>
        </recommendedName>
        <alternativeName>
            <fullName>Intervening segment</fullName>
        </alternativeName>
        <alternativeName>
            <fullName>Pep27</fullName>
        </alternativeName>
        <alternativeName>
            <fullName>Peptide 27</fullName>
        </alternativeName>
    </component>
    <component>
        <recommendedName>
            <fullName evidence="1">Fusion glycoprotein F1</fullName>
            <shortName>F1</shortName>
        </recommendedName>
    </component>
</protein>
<sequence>MELPILKANAITTILAAVTFCFASSQNITEEFYQSTCSAVSKGYLSALRTGWYTSVITIELSNIKENKCNGTDAKVKLINQELDKYKNAVTELQLLMQSTTAANNRARRELPRFMNYTLNNTKKTNVTLSKKRKRRFLGFLLGVGSAIASGIAVSKVLHLEGEVNKIKSALLSTNKAVVSLSNGVSVLTSKVLDLKNYIDKQLLPIVNKQSCRISNIETVIEFQQKNNRLLEITREFSVNAGVTTPVSTYMLTNSELLSLINDMPITNDQKKLMSNNVQIVRQQSYSIMSIIKEEVLAYVVQLPLYGVIDTPCWKLHTSPLCTTNTKEGSNICLTRTDRGWYCDNAGSVSFFPQAETCKVQSNRVFCDTMNSLTLPSEVNLCNVDIFNPKYDCKIMTSKTDVSSSVITSLGAIVSCYGKTKCTASNKNRGIIKTFSNGCDYVSNKGVDTVSVGNTLYYVNKQEGKSLYVKGEPIINFYDPLVFPSDEFDASISQVNEKINQSLAFIRKSDELLHHVNAGKSTTNIMITTIIIVIIVILLSLIAVGLLLYCKARSTPVTLSKDQLSGINNIAFSN</sequence>
<organism>
    <name type="scientific">Human respiratory syncytial virus</name>
    <dbReference type="NCBI Taxonomy" id="11250"/>
    <lineage>
        <taxon>Viruses</taxon>
        <taxon>Riboviria</taxon>
        <taxon>Orthornavirae</taxon>
        <taxon>Negarnaviricota</taxon>
        <taxon>Haploviricotina</taxon>
        <taxon>Monjiviricetes</taxon>
        <taxon>Mononegavirales</taxon>
        <taxon>Pneumoviridae</taxon>
        <taxon>Orthopneumovirus</taxon>
        <taxon>Orthopneumovirus hominis</taxon>
    </lineage>
</organism>
<evidence type="ECO:0000250" key="1">
    <source>
        <dbReference type="UniProtKB" id="P03420"/>
    </source>
</evidence>
<evidence type="ECO:0000250" key="2">
    <source>
        <dbReference type="UniProtKB" id="P11209"/>
    </source>
</evidence>
<evidence type="ECO:0000255" key="3"/>
<evidence type="ECO:0000269" key="4">
    <source>
    </source>
</evidence>
<evidence type="ECO:0000305" key="5"/>
<evidence type="ECO:0007829" key="6">
    <source>
        <dbReference type="PDB" id="8T7A"/>
    </source>
</evidence>
<feature type="signal peptide" evidence="3">
    <location>
        <begin position="1"/>
        <end position="25"/>
    </location>
</feature>
<feature type="chain" id="PRO_0000039240" description="Fusion glycoprotein F0" evidence="1">
    <location>
        <begin position="26"/>
        <end position="574"/>
    </location>
</feature>
<feature type="chain" id="PRO_0000039241" description="Fusion glycoprotein F2" evidence="1">
    <location>
        <begin position="26"/>
        <end position="109"/>
    </location>
</feature>
<feature type="peptide" id="PRO_0000432670" description="p27" evidence="1">
    <location>
        <begin position="110"/>
        <end position="136"/>
    </location>
</feature>
<feature type="chain" id="PRO_0000039242" description="Fusion glycoprotein F1">
    <location>
        <begin position="137"/>
        <end position="574"/>
    </location>
</feature>
<feature type="topological domain" description="Extracellular" evidence="1">
    <location>
        <begin position="26"/>
        <end position="524"/>
    </location>
</feature>
<feature type="transmembrane region" description="Helical" evidence="1">
    <location>
        <begin position="525"/>
        <end position="550"/>
    </location>
</feature>
<feature type="topological domain" description="Cytoplasmic" evidence="1">
    <location>
        <begin position="551"/>
        <end position="574"/>
    </location>
</feature>
<feature type="region of interest" description="Fusion peptide" evidence="2">
    <location>
        <begin position="137"/>
        <end position="157"/>
    </location>
</feature>
<feature type="coiled-coil region" evidence="2">
    <location>
        <begin position="76"/>
        <end position="96"/>
    </location>
</feature>
<feature type="coiled-coil region" evidence="2">
    <location>
        <begin position="158"/>
        <end position="209"/>
    </location>
</feature>
<feature type="coiled-coil region" evidence="2">
    <location>
        <begin position="481"/>
        <end position="516"/>
    </location>
</feature>
<feature type="site" description="Cleavage; by host furin-like protease" evidence="1">
    <location>
        <begin position="109"/>
        <end position="110"/>
    </location>
</feature>
<feature type="site" description="Cleavage; by host furin-like protease" evidence="1">
    <location>
        <begin position="136"/>
        <end position="137"/>
    </location>
</feature>
<feature type="lipid moiety-binding region" description="S-palmitoyl cysteine; by host" evidence="1">
    <location>
        <position position="550"/>
    </location>
</feature>
<feature type="glycosylation site" description="N-linked (GlcNAc...) asparagine; by host" evidence="1">
    <location>
        <position position="27"/>
    </location>
</feature>
<feature type="glycosylation site" description="N-linked (GlcNAc...) asparagine; by host" evidence="1">
    <location>
        <position position="70"/>
    </location>
</feature>
<feature type="glycosylation site" description="N-linked (GlcNAc...) asparagine; by host" evidence="3">
    <location>
        <position position="116"/>
    </location>
</feature>
<feature type="glycosylation site" description="N-linked (GlcNAc...) asparagine; by host" evidence="3">
    <location>
        <position position="120"/>
    </location>
</feature>
<feature type="glycosylation site" description="N-linked (GlcNAc...) asparagine; by host" evidence="3">
    <location>
        <position position="126"/>
    </location>
</feature>
<feature type="glycosylation site" description="N-linked (GlcNAc...) asparagine; by host" evidence="1">
    <location>
        <position position="500"/>
    </location>
</feature>
<feature type="disulfide bond" description="Interchain (between F2 and F1 chains)" evidence="1">
    <location>
        <begin position="37"/>
        <end position="439"/>
    </location>
</feature>
<feature type="disulfide bond" description="Interchain (between F2 and F1 chains)" evidence="1">
    <location>
        <begin position="69"/>
        <end position="212"/>
    </location>
</feature>
<feature type="disulfide bond" evidence="1">
    <location>
        <begin position="313"/>
        <end position="343"/>
    </location>
</feature>
<feature type="disulfide bond" evidence="1">
    <location>
        <begin position="322"/>
        <end position="333"/>
    </location>
</feature>
<feature type="disulfide bond" evidence="1">
    <location>
        <begin position="358"/>
        <end position="367"/>
    </location>
</feature>
<feature type="disulfide bond" evidence="1">
    <location>
        <begin position="382"/>
        <end position="393"/>
    </location>
</feature>
<feature type="disulfide bond" evidence="1">
    <location>
        <begin position="416"/>
        <end position="422"/>
    </location>
</feature>
<feature type="sequence variant" evidence="4">
    <original>N</original>
    <variation>K</variation>
    <location>
        <position position="80"/>
    </location>
</feature>
<feature type="sequence variant" evidence="4">
    <original>T</original>
    <variation>P</variation>
    <location>
        <position position="101"/>
    </location>
</feature>
<feature type="sequence variant" evidence="4">
    <original>I</original>
    <variation>T</variation>
    <location>
        <position position="152"/>
    </location>
</feature>
<feature type="sequence variant" evidence="4">
    <original>V</original>
    <variation>A</variation>
    <location>
        <position position="442"/>
    </location>
</feature>
<feature type="strand" evidence="6">
    <location>
        <begin position="29"/>
        <end position="33"/>
    </location>
</feature>
<feature type="turn" evidence="6">
    <location>
        <begin position="34"/>
        <end position="37"/>
    </location>
</feature>
<feature type="strand" evidence="6">
    <location>
        <begin position="38"/>
        <end position="49"/>
    </location>
</feature>
<feature type="strand" evidence="6">
    <location>
        <begin position="51"/>
        <end position="60"/>
    </location>
</feature>
<feature type="helix" evidence="6">
    <location>
        <begin position="74"/>
        <end position="97"/>
    </location>
</feature>
<feature type="helix" evidence="6">
    <location>
        <begin position="139"/>
        <end position="141"/>
    </location>
</feature>
<feature type="helix" evidence="6">
    <location>
        <begin position="149"/>
        <end position="157"/>
    </location>
</feature>
<feature type="helix" evidence="6">
    <location>
        <begin position="163"/>
        <end position="170"/>
    </location>
</feature>
<feature type="strand" evidence="6">
    <location>
        <begin position="175"/>
        <end position="180"/>
    </location>
</feature>
<feature type="strand" evidence="6">
    <location>
        <begin position="186"/>
        <end position="194"/>
    </location>
</feature>
<feature type="helix" evidence="6">
    <location>
        <begin position="195"/>
        <end position="202"/>
    </location>
</feature>
<feature type="strand" evidence="6">
    <location>
        <begin position="209"/>
        <end position="211"/>
    </location>
</feature>
<feature type="helix" evidence="6">
    <location>
        <begin position="217"/>
        <end position="240"/>
    </location>
</feature>
<feature type="strand" evidence="6">
    <location>
        <begin position="243"/>
        <end position="246"/>
    </location>
</feature>
<feature type="turn" evidence="6">
    <location>
        <begin position="249"/>
        <end position="251"/>
    </location>
</feature>
<feature type="helix" evidence="6">
    <location>
        <begin position="254"/>
        <end position="263"/>
    </location>
</feature>
<feature type="strand" evidence="6">
    <location>
        <begin position="264"/>
        <end position="266"/>
    </location>
</feature>
<feature type="helix" evidence="6">
    <location>
        <begin position="268"/>
        <end position="275"/>
    </location>
</feature>
<feature type="helix" evidence="6">
    <location>
        <begin position="278"/>
        <end position="283"/>
    </location>
</feature>
<feature type="strand" evidence="6">
    <location>
        <begin position="286"/>
        <end position="293"/>
    </location>
</feature>
<feature type="strand" evidence="6">
    <location>
        <begin position="296"/>
        <end position="305"/>
    </location>
</feature>
<feature type="strand" evidence="6">
    <location>
        <begin position="308"/>
        <end position="318"/>
    </location>
</feature>
<feature type="strand" evidence="6">
    <location>
        <begin position="333"/>
        <end position="337"/>
    </location>
</feature>
<feature type="strand" evidence="6">
    <location>
        <begin position="340"/>
        <end position="345"/>
    </location>
</feature>
<feature type="strand" evidence="6">
    <location>
        <begin position="348"/>
        <end position="353"/>
    </location>
</feature>
<feature type="turn" evidence="6">
    <location>
        <begin position="355"/>
        <end position="357"/>
    </location>
</feature>
<feature type="strand" evidence="6">
    <location>
        <begin position="358"/>
        <end position="361"/>
    </location>
</feature>
<feature type="strand" evidence="6">
    <location>
        <begin position="364"/>
        <end position="368"/>
    </location>
</feature>
<feature type="helix" evidence="6">
    <location>
        <begin position="369"/>
        <end position="371"/>
    </location>
</feature>
<feature type="strand" evidence="6">
    <location>
        <begin position="373"/>
        <end position="375"/>
    </location>
</feature>
<feature type="helix" evidence="6">
    <location>
        <begin position="377"/>
        <end position="380"/>
    </location>
</feature>
<feature type="helix" evidence="6">
    <location>
        <begin position="381"/>
        <end position="384"/>
    </location>
</feature>
<feature type="strand" evidence="6">
    <location>
        <begin position="389"/>
        <end position="391"/>
    </location>
</feature>
<feature type="strand" evidence="6">
    <location>
        <begin position="394"/>
        <end position="399"/>
    </location>
</feature>
<feature type="strand" evidence="6">
    <location>
        <begin position="404"/>
        <end position="407"/>
    </location>
</feature>
<feature type="strand" evidence="6">
    <location>
        <begin position="409"/>
        <end position="416"/>
    </location>
</feature>
<feature type="strand" evidence="6">
    <location>
        <begin position="422"/>
        <end position="426"/>
    </location>
</feature>
<feature type="turn" evidence="6">
    <location>
        <begin position="427"/>
        <end position="429"/>
    </location>
</feature>
<feature type="strand" evidence="6">
    <location>
        <begin position="430"/>
        <end position="435"/>
    </location>
</feature>
<feature type="strand" evidence="6">
    <location>
        <begin position="437"/>
        <end position="443"/>
    </location>
</feature>
<feature type="turn" evidence="6">
    <location>
        <begin position="444"/>
        <end position="446"/>
    </location>
</feature>
<feature type="strand" evidence="6">
    <location>
        <begin position="449"/>
        <end position="452"/>
    </location>
</feature>
<feature type="strand" evidence="6">
    <location>
        <begin position="455"/>
        <end position="458"/>
    </location>
</feature>
<feature type="strand" evidence="6">
    <location>
        <begin position="465"/>
        <end position="469"/>
    </location>
</feature>
<feature type="helix" evidence="6">
    <location>
        <begin position="474"/>
        <end position="476"/>
    </location>
</feature>
<feature type="turn" evidence="6">
    <location>
        <begin position="480"/>
        <end position="482"/>
    </location>
</feature>
<feature type="strand" evidence="6">
    <location>
        <begin position="486"/>
        <end position="491"/>
    </location>
</feature>
<feature type="helix" evidence="6">
    <location>
        <begin position="492"/>
        <end position="502"/>
    </location>
</feature>